<organism>
    <name type="scientific">Salmonella agona (strain SL483)</name>
    <dbReference type="NCBI Taxonomy" id="454166"/>
    <lineage>
        <taxon>Bacteria</taxon>
        <taxon>Pseudomonadati</taxon>
        <taxon>Pseudomonadota</taxon>
        <taxon>Gammaproteobacteria</taxon>
        <taxon>Enterobacterales</taxon>
        <taxon>Enterobacteriaceae</taxon>
        <taxon>Salmonella</taxon>
    </lineage>
</organism>
<evidence type="ECO:0000255" key="1">
    <source>
        <dbReference type="HAMAP-Rule" id="MF_01172"/>
    </source>
</evidence>
<sequence>MTAHEVNFDGLVGLTHHYAGLSFGNEASTRHRFQVSNPRLAVKQGLLKMKALADAGFPQAVIPPHERPFIPALRQLGFTGSDEQILDKVARQAPRWLSSVSSASPMWVANAATVCPSADALDGKVHLTVANLNNKFHRALEAPVTEALLRAIFRDESQFSVHSALPQVALLGDEGAANHNRLGGEYGSAGVQLFVYGREEENEIRPARYPARQSREASEAVARLNQVNPQQVIFAQQNPEVIDQGVFHNDVIAVSNRQVLFCHEAAFARQKVLINQLRTRVDGFMAIEVPAGEVSVSDAVATYLFNSQLLSRDDGSMLLVLPRECQDHVGVWRYLNKLVAEDNPISAMQVFDLRESMANGGGPACLRLRVVLTEEERRAVNPAVMMNDALFTALNAWADRYYRDRLTAADLADPLLLREGREALDVLTRLLDLGSVYPFQQTGAADG</sequence>
<proteinExistence type="inferred from homology"/>
<dbReference type="EC" id="3.5.3.23" evidence="1"/>
<dbReference type="EMBL" id="CP001138">
    <property type="protein sequence ID" value="ACH51628.1"/>
    <property type="molecule type" value="Genomic_DNA"/>
</dbReference>
<dbReference type="RefSeq" id="WP_000123949.1">
    <property type="nucleotide sequence ID" value="NC_011149.1"/>
</dbReference>
<dbReference type="SMR" id="B5F7I9"/>
<dbReference type="KEGG" id="sea:SeAg_B1867"/>
<dbReference type="HOGENOM" id="CLU_053835_0_0_6"/>
<dbReference type="UniPathway" id="UPA00185">
    <property type="reaction ID" value="UER00280"/>
</dbReference>
<dbReference type="Proteomes" id="UP000008819">
    <property type="component" value="Chromosome"/>
</dbReference>
<dbReference type="GO" id="GO:0009015">
    <property type="term" value="F:N-succinylarginine dihydrolase activity"/>
    <property type="evidence" value="ECO:0007669"/>
    <property type="project" value="UniProtKB-UniRule"/>
</dbReference>
<dbReference type="GO" id="GO:0019544">
    <property type="term" value="P:arginine catabolic process to glutamate"/>
    <property type="evidence" value="ECO:0007669"/>
    <property type="project" value="UniProtKB-UniRule"/>
</dbReference>
<dbReference type="GO" id="GO:0019545">
    <property type="term" value="P:arginine catabolic process to succinate"/>
    <property type="evidence" value="ECO:0007669"/>
    <property type="project" value="UniProtKB-UniRule"/>
</dbReference>
<dbReference type="FunFam" id="3.75.10.20:FF:000001">
    <property type="entry name" value="N-succinylarginine dihydrolase"/>
    <property type="match status" value="1"/>
</dbReference>
<dbReference type="Gene3D" id="3.75.10.20">
    <property type="entry name" value="Succinylarginine dihydrolase"/>
    <property type="match status" value="1"/>
</dbReference>
<dbReference type="HAMAP" id="MF_01172">
    <property type="entry name" value="AstB"/>
    <property type="match status" value="1"/>
</dbReference>
<dbReference type="InterPro" id="IPR037031">
    <property type="entry name" value="AstB_sf"/>
</dbReference>
<dbReference type="InterPro" id="IPR007079">
    <property type="entry name" value="SuccinylArg_d-Hdrlase_AstB"/>
</dbReference>
<dbReference type="NCBIfam" id="TIGR03241">
    <property type="entry name" value="arg_catab_astB"/>
    <property type="match status" value="1"/>
</dbReference>
<dbReference type="NCBIfam" id="NF009789">
    <property type="entry name" value="PRK13281.1"/>
    <property type="match status" value="1"/>
</dbReference>
<dbReference type="PANTHER" id="PTHR30420">
    <property type="entry name" value="N-SUCCINYLARGININE DIHYDROLASE"/>
    <property type="match status" value="1"/>
</dbReference>
<dbReference type="PANTHER" id="PTHR30420:SF2">
    <property type="entry name" value="N-SUCCINYLARGININE DIHYDROLASE"/>
    <property type="match status" value="1"/>
</dbReference>
<dbReference type="Pfam" id="PF04996">
    <property type="entry name" value="AstB"/>
    <property type="match status" value="1"/>
</dbReference>
<dbReference type="SUPFAM" id="SSF55909">
    <property type="entry name" value="Pentein"/>
    <property type="match status" value="1"/>
</dbReference>
<feature type="chain" id="PRO_1000138021" description="N-succinylarginine dihydrolase">
    <location>
        <begin position="1"/>
        <end position="447"/>
    </location>
</feature>
<feature type="active site" evidence="1">
    <location>
        <position position="174"/>
    </location>
</feature>
<feature type="active site" evidence="1">
    <location>
        <position position="248"/>
    </location>
</feature>
<feature type="active site" description="Nucleophile" evidence="1">
    <location>
        <position position="365"/>
    </location>
</feature>
<feature type="binding site" evidence="1">
    <location>
        <begin position="19"/>
        <end position="28"/>
    </location>
    <ligand>
        <name>substrate</name>
    </ligand>
</feature>
<feature type="binding site" evidence="1">
    <location>
        <position position="110"/>
    </location>
    <ligand>
        <name>substrate</name>
    </ligand>
</feature>
<feature type="binding site" evidence="1">
    <location>
        <begin position="137"/>
        <end position="138"/>
    </location>
    <ligand>
        <name>substrate</name>
    </ligand>
</feature>
<feature type="binding site" evidence="1">
    <location>
        <position position="212"/>
    </location>
    <ligand>
        <name>substrate</name>
    </ligand>
</feature>
<feature type="binding site" evidence="1">
    <location>
        <position position="250"/>
    </location>
    <ligand>
        <name>substrate</name>
    </ligand>
</feature>
<feature type="binding site" evidence="1">
    <location>
        <position position="359"/>
    </location>
    <ligand>
        <name>substrate</name>
    </ligand>
</feature>
<keyword id="KW-0056">Arginine metabolism</keyword>
<keyword id="KW-0378">Hydrolase</keyword>
<protein>
    <recommendedName>
        <fullName evidence="1">N-succinylarginine dihydrolase</fullName>
        <ecNumber evidence="1">3.5.3.23</ecNumber>
    </recommendedName>
</protein>
<name>ASTB_SALA4</name>
<accession>B5F7I9</accession>
<gene>
    <name evidence="1" type="primary">astB</name>
    <name type="ordered locus">SeAg_B1867</name>
</gene>
<reference key="1">
    <citation type="journal article" date="2011" name="J. Bacteriol.">
        <title>Comparative genomics of 28 Salmonella enterica isolates: evidence for CRISPR-mediated adaptive sublineage evolution.</title>
        <authorList>
            <person name="Fricke W.F."/>
            <person name="Mammel M.K."/>
            <person name="McDermott P.F."/>
            <person name="Tartera C."/>
            <person name="White D.G."/>
            <person name="Leclerc J.E."/>
            <person name="Ravel J."/>
            <person name="Cebula T.A."/>
        </authorList>
    </citation>
    <scope>NUCLEOTIDE SEQUENCE [LARGE SCALE GENOMIC DNA]</scope>
    <source>
        <strain>SL483</strain>
    </source>
</reference>
<comment type="function">
    <text evidence="1">Catalyzes the hydrolysis of N(2)-succinylarginine into N(2)-succinylornithine, ammonia and CO(2).</text>
</comment>
<comment type="catalytic activity">
    <reaction evidence="1">
        <text>N(2)-succinyl-L-arginine + 2 H2O + 2 H(+) = N(2)-succinyl-L-ornithine + 2 NH4(+) + CO2</text>
        <dbReference type="Rhea" id="RHEA:19533"/>
        <dbReference type="ChEBI" id="CHEBI:15377"/>
        <dbReference type="ChEBI" id="CHEBI:15378"/>
        <dbReference type="ChEBI" id="CHEBI:16526"/>
        <dbReference type="ChEBI" id="CHEBI:28938"/>
        <dbReference type="ChEBI" id="CHEBI:58241"/>
        <dbReference type="ChEBI" id="CHEBI:58514"/>
        <dbReference type="EC" id="3.5.3.23"/>
    </reaction>
</comment>
<comment type="pathway">
    <text evidence="1">Amino-acid degradation; L-arginine degradation via AST pathway; L-glutamate and succinate from L-arginine: step 2/5.</text>
</comment>
<comment type="subunit">
    <text evidence="1">Homodimer.</text>
</comment>
<comment type="similarity">
    <text evidence="1">Belongs to the succinylarginine dihydrolase family.</text>
</comment>